<evidence type="ECO:0000255" key="1">
    <source>
        <dbReference type="HAMAP-Rule" id="MF_00514"/>
    </source>
</evidence>
<evidence type="ECO:0000256" key="2">
    <source>
        <dbReference type="SAM" id="MobiDB-lite"/>
    </source>
</evidence>
<evidence type="ECO:0000305" key="3"/>
<gene>
    <name evidence="1" type="primary">rpmI</name>
    <name type="ordered locus">HPSH_00625</name>
</gene>
<proteinExistence type="inferred from homology"/>
<feature type="chain" id="PRO_1000127363" description="Large ribosomal subunit protein bL35">
    <location>
        <begin position="1"/>
        <end position="64"/>
    </location>
</feature>
<feature type="region of interest" description="Disordered" evidence="2">
    <location>
        <begin position="38"/>
        <end position="64"/>
    </location>
</feature>
<feature type="compositionally biased region" description="Basic residues" evidence="2">
    <location>
        <begin position="38"/>
        <end position="53"/>
    </location>
</feature>
<dbReference type="EMBL" id="CP001072">
    <property type="protein sequence ID" value="ACD47585.1"/>
    <property type="molecule type" value="Genomic_DNA"/>
</dbReference>
<dbReference type="RefSeq" id="WP_001125542.1">
    <property type="nucleotide sequence ID" value="NC_010698.2"/>
</dbReference>
<dbReference type="SMR" id="B2URV3"/>
<dbReference type="GeneID" id="93236496"/>
<dbReference type="KEGG" id="hps:HPSH_00625"/>
<dbReference type="HOGENOM" id="CLU_169643_1_2_7"/>
<dbReference type="GO" id="GO:0022625">
    <property type="term" value="C:cytosolic large ribosomal subunit"/>
    <property type="evidence" value="ECO:0007669"/>
    <property type="project" value="TreeGrafter"/>
</dbReference>
<dbReference type="GO" id="GO:0003735">
    <property type="term" value="F:structural constituent of ribosome"/>
    <property type="evidence" value="ECO:0007669"/>
    <property type="project" value="InterPro"/>
</dbReference>
<dbReference type="GO" id="GO:0006412">
    <property type="term" value="P:translation"/>
    <property type="evidence" value="ECO:0007669"/>
    <property type="project" value="UniProtKB-UniRule"/>
</dbReference>
<dbReference type="FunFam" id="4.10.410.60:FF:000001">
    <property type="entry name" value="50S ribosomal protein L35"/>
    <property type="match status" value="1"/>
</dbReference>
<dbReference type="Gene3D" id="4.10.410.60">
    <property type="match status" value="1"/>
</dbReference>
<dbReference type="HAMAP" id="MF_00514">
    <property type="entry name" value="Ribosomal_bL35"/>
    <property type="match status" value="1"/>
</dbReference>
<dbReference type="InterPro" id="IPR001706">
    <property type="entry name" value="Ribosomal_bL35"/>
</dbReference>
<dbReference type="InterPro" id="IPR021137">
    <property type="entry name" value="Ribosomal_bL35-like"/>
</dbReference>
<dbReference type="InterPro" id="IPR018265">
    <property type="entry name" value="Ribosomal_bL35_CS"/>
</dbReference>
<dbReference type="InterPro" id="IPR037229">
    <property type="entry name" value="Ribosomal_bL35_sf"/>
</dbReference>
<dbReference type="NCBIfam" id="TIGR00001">
    <property type="entry name" value="rpmI_bact"/>
    <property type="match status" value="1"/>
</dbReference>
<dbReference type="PANTHER" id="PTHR33343">
    <property type="entry name" value="54S RIBOSOMAL PROTEIN BL35M"/>
    <property type="match status" value="1"/>
</dbReference>
<dbReference type="PANTHER" id="PTHR33343:SF1">
    <property type="entry name" value="LARGE RIBOSOMAL SUBUNIT PROTEIN BL35M"/>
    <property type="match status" value="1"/>
</dbReference>
<dbReference type="Pfam" id="PF01632">
    <property type="entry name" value="Ribosomal_L35p"/>
    <property type="match status" value="1"/>
</dbReference>
<dbReference type="PRINTS" id="PR00064">
    <property type="entry name" value="RIBOSOMALL35"/>
</dbReference>
<dbReference type="SUPFAM" id="SSF143034">
    <property type="entry name" value="L35p-like"/>
    <property type="match status" value="1"/>
</dbReference>
<dbReference type="PROSITE" id="PS00936">
    <property type="entry name" value="RIBOSOMAL_L35"/>
    <property type="match status" value="1"/>
</dbReference>
<comment type="similarity">
    <text evidence="1">Belongs to the bacterial ribosomal protein bL35 family.</text>
</comment>
<protein>
    <recommendedName>
        <fullName evidence="1">Large ribosomal subunit protein bL35</fullName>
    </recommendedName>
    <alternativeName>
        <fullName evidence="3">50S ribosomal protein L35</fullName>
    </alternativeName>
</protein>
<reference key="1">
    <citation type="submission" date="2008-05" db="EMBL/GenBank/DDBJ databases">
        <title>Genome sequence of Helicobacter pylori from the remote Amazon: traces of Asian ancestry of the first Americans.</title>
        <authorList>
            <person name="Kersulyte D."/>
            <person name="Kalia A."/>
            <person name="Gilman R.H."/>
            <person name="Berg D.E."/>
        </authorList>
    </citation>
    <scope>NUCLEOTIDE SEQUENCE [LARGE SCALE GENOMIC DNA]</scope>
    <source>
        <strain>Shi470</strain>
    </source>
</reference>
<accession>B2URV3</accession>
<sequence>MPKMKTNRGASKRFKVKKNLIKRGSAFKSHILTKKSPKRKANLNAPKHVHHTNAHSVMSLLCRA</sequence>
<keyword id="KW-0687">Ribonucleoprotein</keyword>
<keyword id="KW-0689">Ribosomal protein</keyword>
<name>RL35_HELPS</name>
<organism>
    <name type="scientific">Helicobacter pylori (strain Shi470)</name>
    <dbReference type="NCBI Taxonomy" id="512562"/>
    <lineage>
        <taxon>Bacteria</taxon>
        <taxon>Pseudomonadati</taxon>
        <taxon>Campylobacterota</taxon>
        <taxon>Epsilonproteobacteria</taxon>
        <taxon>Campylobacterales</taxon>
        <taxon>Helicobacteraceae</taxon>
        <taxon>Helicobacter</taxon>
    </lineage>
</organism>